<evidence type="ECO:0000250" key="1"/>
<evidence type="ECO:0000255" key="2"/>
<evidence type="ECO:0000255" key="3">
    <source>
        <dbReference type="PROSITE-ProRule" id="PRU00077"/>
    </source>
</evidence>
<evidence type="ECO:0000255" key="4">
    <source>
        <dbReference type="PROSITE-ProRule" id="PRU00448"/>
    </source>
</evidence>
<evidence type="ECO:0000256" key="5">
    <source>
        <dbReference type="SAM" id="MobiDB-lite"/>
    </source>
</evidence>
<evidence type="ECO:0000305" key="6"/>
<feature type="chain" id="PRO_0000423542" description="Actin cytoskeleton-regulatory complex protein END3">
    <location>
        <begin position="1"/>
        <end position="396"/>
    </location>
</feature>
<feature type="domain" description="EH 1" evidence="3">
    <location>
        <begin position="9"/>
        <end position="99"/>
    </location>
</feature>
<feature type="domain" description="EF-hand" evidence="4">
    <location>
        <begin position="41"/>
        <end position="76"/>
    </location>
</feature>
<feature type="domain" description="EH 2" evidence="3">
    <location>
        <begin position="138"/>
        <end position="226"/>
    </location>
</feature>
<feature type="region of interest" description="Disordered" evidence="5">
    <location>
        <begin position="341"/>
        <end position="396"/>
    </location>
</feature>
<feature type="coiled-coil region" evidence="2">
    <location>
        <begin position="282"/>
        <end position="395"/>
    </location>
</feature>
<feature type="compositionally biased region" description="Basic and acidic residues" evidence="5">
    <location>
        <begin position="380"/>
        <end position="396"/>
    </location>
</feature>
<feature type="binding site" evidence="4">
    <location>
        <position position="54"/>
    </location>
    <ligand>
        <name>Ca(2+)</name>
        <dbReference type="ChEBI" id="CHEBI:29108"/>
    </ligand>
</feature>
<feature type="binding site" evidence="4">
    <location>
        <position position="56"/>
    </location>
    <ligand>
        <name>Ca(2+)</name>
        <dbReference type="ChEBI" id="CHEBI:29108"/>
    </ligand>
</feature>
<feature type="binding site" evidence="4">
    <location>
        <position position="58"/>
    </location>
    <ligand>
        <name>Ca(2+)</name>
        <dbReference type="ChEBI" id="CHEBI:29108"/>
    </ligand>
</feature>
<feature type="binding site" evidence="4">
    <location>
        <position position="60"/>
    </location>
    <ligand>
        <name>Ca(2+)</name>
        <dbReference type="ChEBI" id="CHEBI:29108"/>
    </ligand>
</feature>
<feature type="binding site" evidence="4">
    <location>
        <position position="65"/>
    </location>
    <ligand>
        <name>Ca(2+)</name>
        <dbReference type="ChEBI" id="CHEBI:29108"/>
    </ligand>
</feature>
<protein>
    <recommendedName>
        <fullName>Actin cytoskeleton-regulatory complex protein END3</fullName>
    </recommendedName>
    <alternativeName>
        <fullName>Endocytosis protein 3</fullName>
    </alternativeName>
</protein>
<name>END3_PYRO3</name>
<reference key="1">
    <citation type="submission" date="2004-12" db="EMBL/GenBank/DDBJ databases">
        <authorList>
            <person name="Dong H.T."/>
            <person name="Peng Y.L."/>
            <person name="Chen B.S."/>
            <person name="Li Y.Z."/>
            <person name="Li D.B."/>
        </authorList>
    </citation>
    <scope>NUCLEOTIDE SEQUENCE [MRNA]</scope>
    <source>
        <strain>Y34</strain>
        <tissue>Conidium</tissue>
    </source>
</reference>
<reference key="2">
    <citation type="journal article" date="2012" name="PLoS Genet.">
        <title>Comparative analysis of the genomes of two field isolates of the rice blast fungus Magnaporthe oryzae.</title>
        <authorList>
            <person name="Xue M."/>
            <person name="Yang J."/>
            <person name="Li Z."/>
            <person name="Hu S."/>
            <person name="Yao N."/>
            <person name="Dean R.A."/>
            <person name="Zhao W."/>
            <person name="Shen M."/>
            <person name="Zhang H."/>
            <person name="Li C."/>
            <person name="Liu L."/>
            <person name="Cao L."/>
            <person name="Xu X."/>
            <person name="Xing Y."/>
            <person name="Hsiang T."/>
            <person name="Zhang Z."/>
            <person name="Xu J.-R."/>
            <person name="Peng Y.-L."/>
        </authorList>
    </citation>
    <scope>NUCLEOTIDE SEQUENCE [LARGE SCALE GENOMIC DNA]</scope>
    <source>
        <strain>Y34</strain>
    </source>
</reference>
<sequence>MAPRIEAQEIETYWNIFSARTNGSKFLTGEQAAPVLKNSGLRDDQLERVWDLADVDNDGNLDFEEFCVAMRVIFDILNGEHADVPSTLPDWLVPESKAHLVQANRALTGKQVQFERVDDDPDSPGLKDGFDWYMSPADKSKYESIYQENRDMRGEVSFGALEDLYESLDVPDTDIRSAWNLINPSAGPTINKDACLAFLHILNYRHEGYRIPRTVPASLRASFERNKIDYQVDKQAASRWATKADDETSTGRKAKFGDQYLTRLGRGSFKTSGTDFSSAQTDSEWEEVRLKKQLAELDAKMASVEADAERRKGGKRDSKPALVKRELEQLLDYKRKQLREIEEGKTKGQGGGSLKGIQDDLQTVREQTDGLASHLRSRQQHLEELRRQIEDEKAGR</sequence>
<accession>L7IIY8</accession>
<accession>G4N017</accession>
<accession>Q5EN00</accession>
<comment type="function">
    <text evidence="1">Component of the PAN1 actin cytoskeleton-regulatory complex required for the internalization of endosomes during actin-coupled endocytosis. The complex links the site of endocytosis to the cell membrane-associated actin cytoskeleton. Mediates uptake of external molecules and vacuolar degradation of plasma membrane proteins. Plays a role in the proper organization of the cell membrane-associated actin cytoskeleton and promotes its destabilization (By similarity).</text>
</comment>
<comment type="subunit">
    <text evidence="1">Component of the PAN1 actin cytoskeleton-regulatory complex.</text>
</comment>
<comment type="subcellular location">
    <subcellularLocation>
        <location evidence="1">Cell membrane</location>
        <topology evidence="1">Peripheral membrane protein</topology>
        <orientation evidence="1">Cytoplasmic side</orientation>
    </subcellularLocation>
    <subcellularLocation>
        <location evidence="1">Endosome membrane</location>
        <topology evidence="1">Peripheral membrane protein</topology>
        <orientation evidence="1">Cytoplasmic side</orientation>
    </subcellularLocation>
    <subcellularLocation>
        <location evidence="1">Cytoplasm</location>
        <location evidence="1">Cytoskeleton</location>
        <location evidence="1">Actin patch</location>
    </subcellularLocation>
    <text evidence="1">Cytoplasmic and cortical actin patches.</text>
</comment>
<comment type="similarity">
    <text evidence="6">Belongs to the END3 family.</text>
</comment>
<gene>
    <name type="primary">END3</name>
    <name type="ORF">OOU_Y34scaffold00192g42</name>
</gene>
<keyword id="KW-0009">Actin-binding</keyword>
<keyword id="KW-0106">Calcium</keyword>
<keyword id="KW-1003">Cell membrane</keyword>
<keyword id="KW-0175">Coiled coil</keyword>
<keyword id="KW-0963">Cytoplasm</keyword>
<keyword id="KW-0206">Cytoskeleton</keyword>
<keyword id="KW-0254">Endocytosis</keyword>
<keyword id="KW-0967">Endosome</keyword>
<keyword id="KW-0472">Membrane</keyword>
<keyword id="KW-0479">Metal-binding</keyword>
<keyword id="KW-0677">Repeat</keyword>
<organism>
    <name type="scientific">Pyricularia oryzae (strain Y34)</name>
    <name type="common">Rice blast fungus</name>
    <name type="synonym">Magnaporthe oryzae</name>
    <dbReference type="NCBI Taxonomy" id="1143189"/>
    <lineage>
        <taxon>Eukaryota</taxon>
        <taxon>Fungi</taxon>
        <taxon>Dikarya</taxon>
        <taxon>Ascomycota</taxon>
        <taxon>Pezizomycotina</taxon>
        <taxon>Sordariomycetes</taxon>
        <taxon>Sordariomycetidae</taxon>
        <taxon>Magnaporthales</taxon>
        <taxon>Pyriculariaceae</taxon>
        <taxon>Pyricularia</taxon>
    </lineage>
</organism>
<dbReference type="EMBL" id="AY849632">
    <property type="protein sequence ID" value="AAX07653.1"/>
    <property type="molecule type" value="mRNA"/>
</dbReference>
<dbReference type="EMBL" id="JH793663">
    <property type="protein sequence ID" value="ELQ42856.1"/>
    <property type="molecule type" value="Genomic_DNA"/>
</dbReference>
<dbReference type="OrthoDB" id="254566at147550"/>
<dbReference type="Proteomes" id="UP000011086">
    <property type="component" value="Unassembled WGS sequence"/>
</dbReference>
<dbReference type="GO" id="GO:0030479">
    <property type="term" value="C:actin cortical patch"/>
    <property type="evidence" value="ECO:0007669"/>
    <property type="project" value="UniProtKB-SubCell"/>
</dbReference>
<dbReference type="GO" id="GO:0010008">
    <property type="term" value="C:endosome membrane"/>
    <property type="evidence" value="ECO:0007669"/>
    <property type="project" value="UniProtKB-SubCell"/>
</dbReference>
<dbReference type="GO" id="GO:0005886">
    <property type="term" value="C:plasma membrane"/>
    <property type="evidence" value="ECO:0007669"/>
    <property type="project" value="UniProtKB-SubCell"/>
</dbReference>
<dbReference type="GO" id="GO:0003779">
    <property type="term" value="F:actin binding"/>
    <property type="evidence" value="ECO:0007669"/>
    <property type="project" value="UniProtKB-KW"/>
</dbReference>
<dbReference type="GO" id="GO:0005509">
    <property type="term" value="F:calcium ion binding"/>
    <property type="evidence" value="ECO:0007669"/>
    <property type="project" value="InterPro"/>
</dbReference>
<dbReference type="GO" id="GO:0007015">
    <property type="term" value="P:actin filament organization"/>
    <property type="evidence" value="ECO:0007669"/>
    <property type="project" value="InterPro"/>
</dbReference>
<dbReference type="GO" id="GO:0006897">
    <property type="term" value="P:endocytosis"/>
    <property type="evidence" value="ECO:0007669"/>
    <property type="project" value="UniProtKB-KW"/>
</dbReference>
<dbReference type="GO" id="GO:0016197">
    <property type="term" value="P:endosomal transport"/>
    <property type="evidence" value="ECO:0007669"/>
    <property type="project" value="TreeGrafter"/>
</dbReference>
<dbReference type="CDD" id="cd00052">
    <property type="entry name" value="EH"/>
    <property type="match status" value="1"/>
</dbReference>
<dbReference type="FunFam" id="1.10.238.10:FF:000339">
    <property type="entry name" value="Actin cytoskeleton-regulatory complex protein END3"/>
    <property type="match status" value="1"/>
</dbReference>
<dbReference type="Gene3D" id="1.10.238.10">
    <property type="entry name" value="EF-hand"/>
    <property type="match status" value="2"/>
</dbReference>
<dbReference type="InterPro" id="IPR011992">
    <property type="entry name" value="EF-hand-dom_pair"/>
</dbReference>
<dbReference type="InterPro" id="IPR018247">
    <property type="entry name" value="EF_Hand_1_Ca_BS"/>
</dbReference>
<dbReference type="InterPro" id="IPR002048">
    <property type="entry name" value="EF_hand_dom"/>
</dbReference>
<dbReference type="InterPro" id="IPR000261">
    <property type="entry name" value="EH_dom"/>
</dbReference>
<dbReference type="InterPro" id="IPR025604">
    <property type="entry name" value="End3"/>
</dbReference>
<dbReference type="PANTHER" id="PTHR11216:SF74">
    <property type="entry name" value="ACTIN CYTOSKELETON-REGULATORY COMPLEX PROTEIN END3"/>
    <property type="match status" value="1"/>
</dbReference>
<dbReference type="PANTHER" id="PTHR11216">
    <property type="entry name" value="EH DOMAIN"/>
    <property type="match status" value="1"/>
</dbReference>
<dbReference type="Pfam" id="PF12763">
    <property type="entry name" value="EH"/>
    <property type="match status" value="1"/>
</dbReference>
<dbReference type="Pfam" id="PF12761">
    <property type="entry name" value="End3"/>
    <property type="match status" value="1"/>
</dbReference>
<dbReference type="SMART" id="SM00054">
    <property type="entry name" value="EFh"/>
    <property type="match status" value="1"/>
</dbReference>
<dbReference type="SMART" id="SM00027">
    <property type="entry name" value="EH"/>
    <property type="match status" value="2"/>
</dbReference>
<dbReference type="SUPFAM" id="SSF47473">
    <property type="entry name" value="EF-hand"/>
    <property type="match status" value="2"/>
</dbReference>
<dbReference type="PROSITE" id="PS00018">
    <property type="entry name" value="EF_HAND_1"/>
    <property type="match status" value="1"/>
</dbReference>
<dbReference type="PROSITE" id="PS50222">
    <property type="entry name" value="EF_HAND_2"/>
    <property type="match status" value="1"/>
</dbReference>
<dbReference type="PROSITE" id="PS50031">
    <property type="entry name" value="EH"/>
    <property type="match status" value="2"/>
</dbReference>
<proteinExistence type="evidence at transcript level"/>